<accession>Q81KT8</accession>
<accession>Q6HS94</accession>
<accession>Q6KLJ1</accession>
<dbReference type="EMBL" id="AE016879">
    <property type="protein sequence ID" value="AAP28586.1"/>
    <property type="molecule type" value="Genomic_DNA"/>
</dbReference>
<dbReference type="EMBL" id="AE017334">
    <property type="protein sequence ID" value="AAT34019.1"/>
    <property type="molecule type" value="Genomic_DNA"/>
</dbReference>
<dbReference type="EMBL" id="AE017225">
    <property type="protein sequence ID" value="AAT56844.1"/>
    <property type="molecule type" value="Genomic_DNA"/>
</dbReference>
<dbReference type="RefSeq" id="NP_847100.1">
    <property type="nucleotide sequence ID" value="NC_003997.3"/>
</dbReference>
<dbReference type="RefSeq" id="WP_000377289.1">
    <property type="nucleotide sequence ID" value="NZ_WXXJ01000026.1"/>
</dbReference>
<dbReference type="RefSeq" id="YP_030794.1">
    <property type="nucleotide sequence ID" value="NC_005945.1"/>
</dbReference>
<dbReference type="SMR" id="Q81KT8"/>
<dbReference type="IntAct" id="Q81KT8">
    <property type="interactions" value="54"/>
</dbReference>
<dbReference type="STRING" id="261594.GBAA_4901"/>
<dbReference type="DNASU" id="1084065"/>
<dbReference type="GeneID" id="45024522"/>
<dbReference type="KEGG" id="ban:BA_4901"/>
<dbReference type="KEGG" id="banh:HYU01_23880"/>
<dbReference type="KEGG" id="bar:GBAA_4901"/>
<dbReference type="KEGG" id="bat:BAS4547"/>
<dbReference type="PATRIC" id="fig|198094.11.peg.4861"/>
<dbReference type="eggNOG" id="COG4477">
    <property type="taxonomic scope" value="Bacteria"/>
</dbReference>
<dbReference type="HOGENOM" id="CLU_034079_1_0_9"/>
<dbReference type="OMA" id="FRSQNHI"/>
<dbReference type="OrthoDB" id="1654473at2"/>
<dbReference type="Proteomes" id="UP000000427">
    <property type="component" value="Chromosome"/>
</dbReference>
<dbReference type="Proteomes" id="UP000000594">
    <property type="component" value="Chromosome"/>
</dbReference>
<dbReference type="GO" id="GO:0005886">
    <property type="term" value="C:plasma membrane"/>
    <property type="evidence" value="ECO:0007669"/>
    <property type="project" value="UniProtKB-SubCell"/>
</dbReference>
<dbReference type="GO" id="GO:0005940">
    <property type="term" value="C:septin ring"/>
    <property type="evidence" value="ECO:0007669"/>
    <property type="project" value="InterPro"/>
</dbReference>
<dbReference type="GO" id="GO:0000917">
    <property type="term" value="P:division septum assembly"/>
    <property type="evidence" value="ECO:0007669"/>
    <property type="project" value="UniProtKB-KW"/>
</dbReference>
<dbReference type="GO" id="GO:0000921">
    <property type="term" value="P:septin ring assembly"/>
    <property type="evidence" value="ECO:0007669"/>
    <property type="project" value="InterPro"/>
</dbReference>
<dbReference type="HAMAP" id="MF_00728">
    <property type="entry name" value="EzrA"/>
    <property type="match status" value="1"/>
</dbReference>
<dbReference type="InterPro" id="IPR010379">
    <property type="entry name" value="EzrA"/>
</dbReference>
<dbReference type="NCBIfam" id="NF003411">
    <property type="entry name" value="PRK04778.1-5"/>
    <property type="match status" value="1"/>
</dbReference>
<dbReference type="NCBIfam" id="NF003413">
    <property type="entry name" value="PRK04778.1-7"/>
    <property type="match status" value="1"/>
</dbReference>
<dbReference type="Pfam" id="PF06160">
    <property type="entry name" value="EzrA"/>
    <property type="match status" value="1"/>
</dbReference>
<name>EZRA_BACAN</name>
<organism>
    <name type="scientific">Bacillus anthracis</name>
    <dbReference type="NCBI Taxonomy" id="1392"/>
    <lineage>
        <taxon>Bacteria</taxon>
        <taxon>Bacillati</taxon>
        <taxon>Bacillota</taxon>
        <taxon>Bacilli</taxon>
        <taxon>Bacillales</taxon>
        <taxon>Bacillaceae</taxon>
        <taxon>Bacillus</taxon>
        <taxon>Bacillus cereus group</taxon>
    </lineage>
</organism>
<gene>
    <name evidence="1" type="primary">ezrA</name>
    <name type="ordered locus">BA_4901</name>
    <name type="ordered locus">GBAA_4901</name>
    <name type="ordered locus">BAS4547</name>
</gene>
<proteinExistence type="inferred from homology"/>
<reference key="1">
    <citation type="journal article" date="2003" name="Nature">
        <title>The genome sequence of Bacillus anthracis Ames and comparison to closely related bacteria.</title>
        <authorList>
            <person name="Read T.D."/>
            <person name="Peterson S.N."/>
            <person name="Tourasse N.J."/>
            <person name="Baillie L.W."/>
            <person name="Paulsen I.T."/>
            <person name="Nelson K.E."/>
            <person name="Tettelin H."/>
            <person name="Fouts D.E."/>
            <person name="Eisen J.A."/>
            <person name="Gill S.R."/>
            <person name="Holtzapple E.K."/>
            <person name="Okstad O.A."/>
            <person name="Helgason E."/>
            <person name="Rilstone J."/>
            <person name="Wu M."/>
            <person name="Kolonay J.F."/>
            <person name="Beanan M.J."/>
            <person name="Dodson R.J."/>
            <person name="Brinkac L.M."/>
            <person name="Gwinn M.L."/>
            <person name="DeBoy R.T."/>
            <person name="Madpu R."/>
            <person name="Daugherty S.C."/>
            <person name="Durkin A.S."/>
            <person name="Haft D.H."/>
            <person name="Nelson W.C."/>
            <person name="Peterson J.D."/>
            <person name="Pop M."/>
            <person name="Khouri H.M."/>
            <person name="Radune D."/>
            <person name="Benton J.L."/>
            <person name="Mahamoud Y."/>
            <person name="Jiang L."/>
            <person name="Hance I.R."/>
            <person name="Weidman J.F."/>
            <person name="Berry K.J."/>
            <person name="Plaut R.D."/>
            <person name="Wolf A.M."/>
            <person name="Watkins K.L."/>
            <person name="Nierman W.C."/>
            <person name="Hazen A."/>
            <person name="Cline R.T."/>
            <person name="Redmond C."/>
            <person name="Thwaite J.E."/>
            <person name="White O."/>
            <person name="Salzberg S.L."/>
            <person name="Thomason B."/>
            <person name="Friedlander A.M."/>
            <person name="Koehler T.M."/>
            <person name="Hanna P.C."/>
            <person name="Kolstoe A.-B."/>
            <person name="Fraser C.M."/>
        </authorList>
    </citation>
    <scope>NUCLEOTIDE SEQUENCE [LARGE SCALE GENOMIC DNA]</scope>
    <source>
        <strain>Ames / isolate Porton</strain>
    </source>
</reference>
<reference key="2">
    <citation type="journal article" date="2009" name="J. Bacteriol.">
        <title>The complete genome sequence of Bacillus anthracis Ames 'Ancestor'.</title>
        <authorList>
            <person name="Ravel J."/>
            <person name="Jiang L."/>
            <person name="Stanley S.T."/>
            <person name="Wilson M.R."/>
            <person name="Decker R.S."/>
            <person name="Read T.D."/>
            <person name="Worsham P."/>
            <person name="Keim P.S."/>
            <person name="Salzberg S.L."/>
            <person name="Fraser-Liggett C.M."/>
            <person name="Rasko D.A."/>
        </authorList>
    </citation>
    <scope>NUCLEOTIDE SEQUENCE [LARGE SCALE GENOMIC DNA]</scope>
    <source>
        <strain>Ames ancestor</strain>
    </source>
</reference>
<reference key="3">
    <citation type="submission" date="2004-01" db="EMBL/GenBank/DDBJ databases">
        <title>Complete genome sequence of Bacillus anthracis Sterne.</title>
        <authorList>
            <person name="Brettin T.S."/>
            <person name="Bruce D."/>
            <person name="Challacombe J.F."/>
            <person name="Gilna P."/>
            <person name="Han C."/>
            <person name="Hill K."/>
            <person name="Hitchcock P."/>
            <person name="Jackson P."/>
            <person name="Keim P."/>
            <person name="Longmire J."/>
            <person name="Lucas S."/>
            <person name="Okinaka R."/>
            <person name="Richardson P."/>
            <person name="Rubin E."/>
            <person name="Tice H."/>
        </authorList>
    </citation>
    <scope>NUCLEOTIDE SEQUENCE [LARGE SCALE GENOMIC DNA]</scope>
    <source>
        <strain>Sterne</strain>
    </source>
</reference>
<protein>
    <recommendedName>
        <fullName evidence="1">Septation ring formation regulator EzrA</fullName>
    </recommendedName>
</protein>
<feature type="chain" id="PRO_0000172867" description="Septation ring formation regulator EzrA">
    <location>
        <begin position="1"/>
        <end position="570"/>
    </location>
</feature>
<feature type="topological domain" description="Extracellular" evidence="1">
    <location>
        <begin position="1"/>
        <end position="6"/>
    </location>
</feature>
<feature type="transmembrane region" description="Helical" evidence="1">
    <location>
        <begin position="7"/>
        <end position="25"/>
    </location>
</feature>
<feature type="topological domain" description="Cytoplasmic" evidence="1">
    <location>
        <begin position="26"/>
        <end position="570"/>
    </location>
</feature>
<feature type="coiled-coil region" evidence="1">
    <location>
        <begin position="115"/>
        <end position="149"/>
    </location>
</feature>
<feature type="coiled-coil region" evidence="1">
    <location>
        <begin position="272"/>
        <end position="304"/>
    </location>
</feature>
<feature type="coiled-coil region" evidence="1">
    <location>
        <begin position="355"/>
        <end position="429"/>
    </location>
</feature>
<sequence length="570" mass="66436">MDSILTIVIIVVSSILVLLMIELVIRNRSYKDIEALEQWKQEIKDKPVADELKRVKDLNMTGQTEELFGKWREEWDEIVSTTIPKADKDLAQARKFASQFSFRKAKHAMNESISGLDDADNRITDILNELQQLLESHEKNSSEIEGLRDTYRSMKKSVLAHRHMYGAAEQKIEEMLDAESEKFKTFEEATNNGDYLKAREIVISLEEGLADLEIIIHQIPDLLVECQATLPVQLEDLLHGHNDMVRQGYVLDYLEVPKEVRDMTKQLQTCLIDIQELHITEAAEKVENLKTRLDGFYDQLEQEVHARHYVEQKTLSVYEDLEEIRTETIETKAETQLVKQSYQLQDKDIESQKVIEKQMHILTKRFEMLQLRVAEQDIAFSIIREELEEIYEQCETLKVLHAEYKEMLQTMRKEEFEAREKLQEMRNTIFETKRFMQKSNLPGLPESIMEDLKRGQMAMQAVYEQLEVKPLNMNAVNSSLEEAYTTVNGVAEMTEELIGQAYLVEKLIQYGNRYRSHDENLAESLNYAEKLFREYQYDAALEQAASVLEQLEPGVVQKIAEYVDNEQTLS</sequence>
<evidence type="ECO:0000255" key="1">
    <source>
        <dbReference type="HAMAP-Rule" id="MF_00728"/>
    </source>
</evidence>
<comment type="function">
    <text evidence="1">Negative regulator of FtsZ ring formation; modulates the frequency and position of FtsZ ring formation. Inhibits FtsZ ring formation at polar sites. Interacts either with FtsZ or with one of its binding partners to promote depolymerization.</text>
</comment>
<comment type="subcellular location">
    <subcellularLocation>
        <location>Cell membrane</location>
        <topology>Single-pass membrane protein</topology>
    </subcellularLocation>
    <text evidence="1">Colocalized with FtsZ to the nascent septal site.</text>
</comment>
<comment type="similarity">
    <text evidence="1">Belongs to the EzrA family.</text>
</comment>
<keyword id="KW-0131">Cell cycle</keyword>
<keyword id="KW-0132">Cell division</keyword>
<keyword id="KW-1003">Cell membrane</keyword>
<keyword id="KW-0175">Coiled coil</keyword>
<keyword id="KW-0472">Membrane</keyword>
<keyword id="KW-1185">Reference proteome</keyword>
<keyword id="KW-0717">Septation</keyword>
<keyword id="KW-0812">Transmembrane</keyword>
<keyword id="KW-1133">Transmembrane helix</keyword>